<reference key="1">
    <citation type="journal article" date="2003" name="Mol. Microbiol.">
        <title>Genome-based analysis of virulence genes in a non-biofilm-forming Staphylococcus epidermidis strain (ATCC 12228).</title>
        <authorList>
            <person name="Zhang Y.-Q."/>
            <person name="Ren S.-X."/>
            <person name="Li H.-L."/>
            <person name="Wang Y.-X."/>
            <person name="Fu G."/>
            <person name="Yang J."/>
            <person name="Qin Z.-Q."/>
            <person name="Miao Y.-G."/>
            <person name="Wang W.-Y."/>
            <person name="Chen R.-S."/>
            <person name="Shen Y."/>
            <person name="Chen Z."/>
            <person name="Yuan Z.-H."/>
            <person name="Zhao G.-P."/>
            <person name="Qu D."/>
            <person name="Danchin A."/>
            <person name="Wen Y.-M."/>
        </authorList>
    </citation>
    <scope>NUCLEOTIDE SEQUENCE [LARGE SCALE GENOMIC DNA]</scope>
    <source>
        <strain>ATCC 12228 / FDA PCI 1200</strain>
    </source>
</reference>
<proteinExistence type="inferred from homology"/>
<keyword id="KW-1003">Cell membrane</keyword>
<keyword id="KW-0472">Membrane</keyword>
<keyword id="KW-0812">Transmembrane</keyword>
<keyword id="KW-1133">Transmembrane helix</keyword>
<evidence type="ECO:0000250" key="1"/>
<evidence type="ECO:0000255" key="2"/>
<evidence type="ECO:0000305" key="3"/>
<feature type="chain" id="PRO_0000388319" description="UPF0754 membrane protein SE_1527">
    <location>
        <begin position="1"/>
        <end position="376"/>
    </location>
</feature>
<feature type="transmembrane region" description="Helical" evidence="2">
    <location>
        <begin position="4"/>
        <end position="24"/>
    </location>
</feature>
<feature type="transmembrane region" description="Helical" evidence="2">
    <location>
        <begin position="356"/>
        <end position="376"/>
    </location>
</feature>
<sequence length="376" mass="44347">MHTILLVVFMIILGAIIGGVTNMIAIKMLFHPFKPYYIFRFRIPFTPGLIPKRREEIARKIGQVIEEHLITEELIRQKLNQPQSRNMIQQLIHKQISKLKNDDVTIKKIAGFLGIDVNELVDYKLTTKFLNKLNFWYESNKYRKLSEILPQSFLDQCKGQIEYITDFLCERARNYLSSEKGERDIYEMLDTFFNEKGRIIGLLQMFMTKESIADRIQHELIRLTQHPQSQKIITKVLNDEYEIFKDKNLDEIIKEQQFKNYSQLVLNELKTYLNLKDKTERPIKQVVPQFIQFLEDDTSKRMTDFIIKGTSKHLTNIMKKINLRQLVEEQINTFDLKYIENLIIDIANKELKLIMTLGFILGGIIGFFQGVIAIFV</sequence>
<organism>
    <name type="scientific">Staphylococcus epidermidis (strain ATCC 12228 / FDA PCI 1200)</name>
    <dbReference type="NCBI Taxonomy" id="176280"/>
    <lineage>
        <taxon>Bacteria</taxon>
        <taxon>Bacillati</taxon>
        <taxon>Bacillota</taxon>
        <taxon>Bacilli</taxon>
        <taxon>Bacillales</taxon>
        <taxon>Staphylococcaceae</taxon>
        <taxon>Staphylococcus</taxon>
    </lineage>
</organism>
<name>Y1527_STAES</name>
<comment type="subcellular location">
    <subcellularLocation>
        <location evidence="1">Cell membrane</location>
        <topology evidence="1">Multi-pass membrane protein</topology>
    </subcellularLocation>
</comment>
<comment type="similarity">
    <text evidence="3">Belongs to the UPF0754 family.</text>
</comment>
<accession>Q8CRX9</accession>
<gene>
    <name type="ordered locus">SE_1527</name>
</gene>
<protein>
    <recommendedName>
        <fullName>UPF0754 membrane protein SE_1527</fullName>
    </recommendedName>
</protein>
<dbReference type="EMBL" id="AE015929">
    <property type="protein sequence ID" value="AAO05126.1"/>
    <property type="molecule type" value="Genomic_DNA"/>
</dbReference>
<dbReference type="RefSeq" id="NP_765082.1">
    <property type="nucleotide sequence ID" value="NC_004461.1"/>
</dbReference>
<dbReference type="RefSeq" id="WP_011082738.1">
    <property type="nucleotide sequence ID" value="NC_004461.1"/>
</dbReference>
<dbReference type="SMR" id="Q8CRX9"/>
<dbReference type="DNASU" id="1055800"/>
<dbReference type="KEGG" id="sep:SE_1527"/>
<dbReference type="PATRIC" id="fig|176280.10.peg.1492"/>
<dbReference type="eggNOG" id="COG4399">
    <property type="taxonomic scope" value="Bacteria"/>
</dbReference>
<dbReference type="HOGENOM" id="CLU_042384_0_0_9"/>
<dbReference type="OrthoDB" id="9787430at2"/>
<dbReference type="Proteomes" id="UP000001411">
    <property type="component" value="Chromosome"/>
</dbReference>
<dbReference type="GO" id="GO:0005886">
    <property type="term" value="C:plasma membrane"/>
    <property type="evidence" value="ECO:0007669"/>
    <property type="project" value="UniProtKB-SubCell"/>
</dbReference>
<dbReference type="InterPro" id="IPR007383">
    <property type="entry name" value="DUF445"/>
</dbReference>
<dbReference type="InterPro" id="IPR016991">
    <property type="entry name" value="UCP032178"/>
</dbReference>
<dbReference type="PANTHER" id="PTHR35791">
    <property type="entry name" value="UPF0754 MEMBRANE PROTEIN YHEB"/>
    <property type="match status" value="1"/>
</dbReference>
<dbReference type="PANTHER" id="PTHR35791:SF1">
    <property type="entry name" value="UPF0754 MEMBRANE PROTEIN YHEB"/>
    <property type="match status" value="1"/>
</dbReference>
<dbReference type="Pfam" id="PF04286">
    <property type="entry name" value="DUF445"/>
    <property type="match status" value="1"/>
</dbReference>
<dbReference type="PIRSF" id="PIRSF032178">
    <property type="entry name" value="UCP032178"/>
    <property type="match status" value="1"/>
</dbReference>